<reference key="1">
    <citation type="journal article" date="2006" name="Nat. Cell Biol.">
        <title>A selective block of nuclear actin export stabilizes the giant nuclei of Xenopus oocytes.</title>
        <authorList>
            <person name="Bohnsack M.T."/>
            <person name="Stueven T."/>
            <person name="Kuhn C."/>
            <person name="Cordes V.C."/>
            <person name="Goerlich D."/>
        </authorList>
    </citation>
    <scope>NUCLEOTIDE SEQUENCE [MRNA]</scope>
    <scope>FUNCTION IN ACTIN AND PROFILIN-ACTIN COMPLEXES EXPORT</scope>
    <scope>DEVELOPMENTAL STAGE</scope>
    <scope>SUBCELLULAR LOCATION</scope>
    <scope>TISSUE SPECIFICITY</scope>
    <source>
        <tissue>Egg</tissue>
    </source>
</reference>
<reference key="2">
    <citation type="submission" date="2004-10" db="EMBL/GenBank/DDBJ databases">
        <authorList>
            <consortium name="NIH - Xenopus Gene Collection (XGC) project"/>
        </authorList>
    </citation>
    <scope>NUCLEOTIDE SEQUENCE [LARGE SCALE MRNA]</scope>
    <source>
        <tissue>Embryo</tissue>
    </source>
</reference>
<evidence type="ECO:0000255" key="1">
    <source>
        <dbReference type="PROSITE-ProRule" id="PRU00115"/>
    </source>
</evidence>
<evidence type="ECO:0000269" key="2">
    <source>
    </source>
</evidence>
<evidence type="ECO:0000305" key="3"/>
<name>XPO6A_XENLA</name>
<dbReference type="EMBL" id="AJ865375">
    <property type="protein sequence ID" value="CAI26296.1"/>
    <property type="molecule type" value="mRNA"/>
</dbReference>
<dbReference type="EMBL" id="BC084952">
    <property type="protein sequence ID" value="AAH84952.1"/>
    <property type="molecule type" value="mRNA"/>
</dbReference>
<dbReference type="RefSeq" id="NP_001088605.1">
    <property type="nucleotide sequence ID" value="NM_001095136.1"/>
</dbReference>
<dbReference type="SMR" id="Q53I77"/>
<dbReference type="TCDB" id="9.B.204.2.2">
    <property type="family name" value="the 4 tms ciliary biogenesis tmem17 (tmem17) family"/>
</dbReference>
<dbReference type="DNASU" id="495496"/>
<dbReference type="GeneID" id="495496"/>
<dbReference type="KEGG" id="xla:495496"/>
<dbReference type="AGR" id="Xenbase:XB-GENE-6253815"/>
<dbReference type="CTD" id="495496"/>
<dbReference type="Xenbase" id="XB-GENE-6253815">
    <property type="gene designation" value="xpo6.S"/>
</dbReference>
<dbReference type="OrthoDB" id="10261013at2759"/>
<dbReference type="Proteomes" id="UP000186698">
    <property type="component" value="Chromosome 9_10S"/>
</dbReference>
<dbReference type="Bgee" id="495496">
    <property type="expression patterns" value="Expressed in egg cell and 19 other cell types or tissues"/>
</dbReference>
<dbReference type="GO" id="GO:0005737">
    <property type="term" value="C:cytoplasm"/>
    <property type="evidence" value="ECO:0007669"/>
    <property type="project" value="UniProtKB-SubCell"/>
</dbReference>
<dbReference type="GO" id="GO:0005634">
    <property type="term" value="C:nucleus"/>
    <property type="evidence" value="ECO:0007669"/>
    <property type="project" value="UniProtKB-SubCell"/>
</dbReference>
<dbReference type="GO" id="GO:0005049">
    <property type="term" value="F:nuclear export signal receptor activity"/>
    <property type="evidence" value="ECO:0007669"/>
    <property type="project" value="InterPro"/>
</dbReference>
<dbReference type="GO" id="GO:0031267">
    <property type="term" value="F:small GTPase binding"/>
    <property type="evidence" value="ECO:0007669"/>
    <property type="project" value="InterPro"/>
</dbReference>
<dbReference type="GO" id="GO:0006611">
    <property type="term" value="P:protein export from nucleus"/>
    <property type="evidence" value="ECO:0000250"/>
    <property type="project" value="UniProtKB"/>
</dbReference>
<dbReference type="FunFam" id="1.25.10.10:FF:000147">
    <property type="entry name" value="exportin-6 isoform X2"/>
    <property type="match status" value="1"/>
</dbReference>
<dbReference type="Gene3D" id="1.25.10.10">
    <property type="entry name" value="Leucine-rich Repeat Variant"/>
    <property type="match status" value="1"/>
</dbReference>
<dbReference type="InterPro" id="IPR011989">
    <property type="entry name" value="ARM-like"/>
</dbReference>
<dbReference type="InterPro" id="IPR016024">
    <property type="entry name" value="ARM-type_fold"/>
</dbReference>
<dbReference type="InterPro" id="IPR013598">
    <property type="entry name" value="Exportin-1/Importin-b-like"/>
</dbReference>
<dbReference type="InterPro" id="IPR001494">
    <property type="entry name" value="Importin-beta_N"/>
</dbReference>
<dbReference type="InterPro" id="IPR040016">
    <property type="entry name" value="XPO6"/>
</dbReference>
<dbReference type="PANTHER" id="PTHR21452">
    <property type="entry name" value="EXPORTIN-6"/>
    <property type="match status" value="1"/>
</dbReference>
<dbReference type="PANTHER" id="PTHR21452:SF4">
    <property type="entry name" value="EXPORTIN-6"/>
    <property type="match status" value="1"/>
</dbReference>
<dbReference type="Pfam" id="PF03810">
    <property type="entry name" value="IBN_N"/>
    <property type="match status" value="1"/>
</dbReference>
<dbReference type="Pfam" id="PF08389">
    <property type="entry name" value="Xpo1"/>
    <property type="match status" value="1"/>
</dbReference>
<dbReference type="SMART" id="SM00913">
    <property type="entry name" value="IBN_N"/>
    <property type="match status" value="1"/>
</dbReference>
<dbReference type="SUPFAM" id="SSF48371">
    <property type="entry name" value="ARM repeat"/>
    <property type="match status" value="1"/>
</dbReference>
<dbReference type="PROSITE" id="PS50166">
    <property type="entry name" value="IMPORTIN_B_NT"/>
    <property type="match status" value="1"/>
</dbReference>
<proteinExistence type="evidence at protein level"/>
<organism>
    <name type="scientific">Xenopus laevis</name>
    <name type="common">African clawed frog</name>
    <dbReference type="NCBI Taxonomy" id="8355"/>
    <lineage>
        <taxon>Eukaryota</taxon>
        <taxon>Metazoa</taxon>
        <taxon>Chordata</taxon>
        <taxon>Craniata</taxon>
        <taxon>Vertebrata</taxon>
        <taxon>Euteleostomi</taxon>
        <taxon>Amphibia</taxon>
        <taxon>Batrachia</taxon>
        <taxon>Anura</taxon>
        <taxon>Pipoidea</taxon>
        <taxon>Pipidae</taxon>
        <taxon>Xenopodinae</taxon>
        <taxon>Xenopus</taxon>
        <taxon>Xenopus</taxon>
    </lineage>
</organism>
<comment type="function">
    <text evidence="2">Mediates the nuclear export of actin and profilin-actin complexes in somatic cells. Oocyte nuclei lack active actin export.</text>
</comment>
<comment type="subcellular location">
    <subcellularLocation>
        <location evidence="2">Nucleus</location>
    </subcellularLocation>
    <subcellularLocation>
        <location evidence="2">Cytoplasm</location>
    </subcellularLocation>
    <text evidence="2">Shuttles between the nucleus and the cytoplasm.</text>
</comment>
<comment type="tissue specificity">
    <text evidence="2">Expressed during meiotic maturation 2 hours after germinal vesicle break down (GVBD) and in unfertilized and fertilized eggs, but not in oocytes (at protein level). Expressed in somatic cells, in oocytes, during meiotic maturation and in unfertilized and fertilized eggs.</text>
</comment>
<comment type="developmental stage">
    <text evidence="2">Expressed in embryo at 8, 12 and 30 hours post-fertilization (hpf).</text>
</comment>
<comment type="similarity">
    <text evidence="3">Belongs to the exportin family.</text>
</comment>
<accession>Q53I77</accession>
<accession>Q5U4U2</accession>
<keyword id="KW-0963">Cytoplasm</keyword>
<keyword id="KW-0539">Nucleus</keyword>
<keyword id="KW-0653">Protein transport</keyword>
<keyword id="KW-1185">Reference proteome</keyword>
<keyword id="KW-0813">Transport</keyword>
<sequence length="1135" mass="129849">MASEEASLRALESLMSEFFHNGTSNERKREIESLLNNFAQQLGAWRFCFYFLSQSQNDYVLMYSLSVFENMINKMWLGVPSQEKMEIRNSLPKLLLSQHKSLPSFICNKLCKVIVDMGRQDWPMFYHDFFTNILQLIQTPSTTPLGLIMLKTASEELACPREDLIVARKEELRKLLLEQVPTVLDLLTGVLESIWDKHSITAATPPPSPTASDTDDLLSNLIHTPNLTKQLSQPPPSLEAESERVCALALECLSHLFSWIPLSASITPSLLTTIFQFARLGCDARSRQTNSVTTNTTASVVNGRSSSPPTAPARDLARLGVLAMSCINELMCKNCVPLEFQEYLLRVCQQTFYLLQRITRETNAHSVRSRFEELDESYVEKFTDFLRLFVSVHLRRIESNAQFPLLEFLTLLFKYTFHQPTREGYLSCLDIWAQFLDYLTNKIRNRLEDRDAIIGRYEDALVLLLNEVLNRIQFRYNQTQLEELDDETLDDDQQTEWQRYLRHSLEVVAKIMDLLPTHAFSKLFAALQENLNVYLGLQRCLVTNGNDQRLNVTAENDCRRLHCSLRDLSSLLQAVGRLAEYFIGDMFGARFNDALTVVERLVEVTLYGSRIKLYNMETAVPSVLKPDLIDVHAQSLAALQAYSHWLARYYSEVQRQNPEQFISIISTAMEALPPLISTKVQEKLLLSACHLLVSIATTVRPMFLLNIPSVQKVFSRVTDSSAQRLPEEAQVLLCRALSNVLLLPWPNVPEGEQQWAERSSHHSNLLNALTRDYRLLKGSSLPQRKGQLEATKRVICQTLGVLRDIVENISGEGTKSRQICYQSLQESAQLSLTLFPAYIHQSDVTEEMLSFFLALFQGLRVQMGAPFTEQIIQTFLNMFTREQLAESILQEGSAGCHVVEKFLKILQVVVQEPGQSFKPFLPSILSLCMEQLYPIIAERPSPDVKAELFELLFQLLHHNWRYFYRSSVLASVHRDGSDEPMENQAQFIVVMQAFGQSFLQPDIHIFRQNLSYLETLNSKHKLYHKKLFQTGMLPQFVSVLLQVLIHKSHDLLQEEIGIAVYNMASVDFSTFFSTFLPEFLTGCQGLDTSQKSVLARNFKMERDLPSFTQSVHRLVNDLRYYRLCNDSLPPGTVKL</sequence>
<gene>
    <name type="primary">xpo6-a</name>
</gene>
<protein>
    <recommendedName>
        <fullName>Exportin-6-A</fullName>
    </recommendedName>
</protein>
<feature type="chain" id="PRO_0000235303" description="Exportin-6-A">
    <location>
        <begin position="1"/>
        <end position="1135"/>
    </location>
</feature>
<feature type="domain" description="Importin N-terminal" evidence="1">
    <location>
        <begin position="31"/>
        <end position="97"/>
    </location>
</feature>
<feature type="sequence conflict" description="In Ref. 2; AAH84952." evidence="3" ref="2">
    <original>A</original>
    <variation>V</variation>
    <location>
        <position position="790"/>
    </location>
</feature>